<comment type="function">
    <text evidence="2">Ras proteins bind GDP/GTP and possess intrinsic GTPase activity.</text>
</comment>
<comment type="catalytic activity">
    <reaction evidence="2">
        <text>GTP + H2O = GDP + phosphate + H(+)</text>
        <dbReference type="Rhea" id="RHEA:19669"/>
        <dbReference type="ChEBI" id="CHEBI:15377"/>
        <dbReference type="ChEBI" id="CHEBI:15378"/>
        <dbReference type="ChEBI" id="CHEBI:37565"/>
        <dbReference type="ChEBI" id="CHEBI:43474"/>
        <dbReference type="ChEBI" id="CHEBI:58189"/>
        <dbReference type="EC" id="3.6.5.2"/>
    </reaction>
</comment>
<comment type="subcellular location">
    <subcellularLocation>
        <location evidence="3">Cell membrane</location>
        <topology evidence="3">Lipid-anchor</topology>
        <orientation evidence="3">Cytoplasmic side</orientation>
    </subcellularLocation>
</comment>
<comment type="similarity">
    <text evidence="3">Belongs to the small GTPase superfamily. Ras family.</text>
</comment>
<accession>Q55CA9</accession>
<sequence length="214" mass="24751">MASYKNNNLVRLCIMGDGGVGKTAVTIQFISNHFVYYYDPTIEDSYRKQCVIDDQVYMLDILDTAGQDELTAMRDQWIRSCEGFVLVYSITSRSSFDQVQFFREQIIRVLDRDDVPIMMIGNKSDLDDERQVTYQEGKDLARCLGMSFMEVSAKSRANIEEVFNETVRSVKRREESLLKKDKSKDGKDIKKKNSIIKKLNQKVNNTKTSICKMM</sequence>
<protein>
    <recommendedName>
        <fullName>Ras-like protein rasZ</fullName>
        <ecNumber evidence="2">3.6.5.2</ecNumber>
    </recommendedName>
</protein>
<name>RASZ_DICDI</name>
<reference key="1">
    <citation type="journal article" date="2005" name="Nature">
        <title>The genome of the social amoeba Dictyostelium discoideum.</title>
        <authorList>
            <person name="Eichinger L."/>
            <person name="Pachebat J.A."/>
            <person name="Gloeckner G."/>
            <person name="Rajandream M.A."/>
            <person name="Sucgang R."/>
            <person name="Berriman M."/>
            <person name="Song J."/>
            <person name="Olsen R."/>
            <person name="Szafranski K."/>
            <person name="Xu Q."/>
            <person name="Tunggal B."/>
            <person name="Kummerfeld S."/>
            <person name="Madera M."/>
            <person name="Konfortov B.A."/>
            <person name="Rivero F."/>
            <person name="Bankier A.T."/>
            <person name="Lehmann R."/>
            <person name="Hamlin N."/>
            <person name="Davies R."/>
            <person name="Gaudet P."/>
            <person name="Fey P."/>
            <person name="Pilcher K."/>
            <person name="Chen G."/>
            <person name="Saunders D."/>
            <person name="Sodergren E.J."/>
            <person name="Davis P."/>
            <person name="Kerhornou A."/>
            <person name="Nie X."/>
            <person name="Hall N."/>
            <person name="Anjard C."/>
            <person name="Hemphill L."/>
            <person name="Bason N."/>
            <person name="Farbrother P."/>
            <person name="Desany B."/>
            <person name="Just E."/>
            <person name="Morio T."/>
            <person name="Rost R."/>
            <person name="Churcher C.M."/>
            <person name="Cooper J."/>
            <person name="Haydock S."/>
            <person name="van Driessche N."/>
            <person name="Cronin A."/>
            <person name="Goodhead I."/>
            <person name="Muzny D.M."/>
            <person name="Mourier T."/>
            <person name="Pain A."/>
            <person name="Lu M."/>
            <person name="Harper D."/>
            <person name="Lindsay R."/>
            <person name="Hauser H."/>
            <person name="James K.D."/>
            <person name="Quiles M."/>
            <person name="Madan Babu M."/>
            <person name="Saito T."/>
            <person name="Buchrieser C."/>
            <person name="Wardroper A."/>
            <person name="Felder M."/>
            <person name="Thangavelu M."/>
            <person name="Johnson D."/>
            <person name="Knights A."/>
            <person name="Loulseged H."/>
            <person name="Mungall K.L."/>
            <person name="Oliver K."/>
            <person name="Price C."/>
            <person name="Quail M.A."/>
            <person name="Urushihara H."/>
            <person name="Hernandez J."/>
            <person name="Rabbinowitsch E."/>
            <person name="Steffen D."/>
            <person name="Sanders M."/>
            <person name="Ma J."/>
            <person name="Kohara Y."/>
            <person name="Sharp S."/>
            <person name="Simmonds M.N."/>
            <person name="Spiegler S."/>
            <person name="Tivey A."/>
            <person name="Sugano S."/>
            <person name="White B."/>
            <person name="Walker D."/>
            <person name="Woodward J.R."/>
            <person name="Winckler T."/>
            <person name="Tanaka Y."/>
            <person name="Shaulsky G."/>
            <person name="Schleicher M."/>
            <person name="Weinstock G.M."/>
            <person name="Rosenthal A."/>
            <person name="Cox E.C."/>
            <person name="Chisholm R.L."/>
            <person name="Gibbs R.A."/>
            <person name="Loomis W.F."/>
            <person name="Platzer M."/>
            <person name="Kay R.R."/>
            <person name="Williams J.G."/>
            <person name="Dear P.H."/>
            <person name="Noegel A.A."/>
            <person name="Barrell B.G."/>
            <person name="Kuspa A."/>
        </authorList>
    </citation>
    <scope>NUCLEOTIDE SEQUENCE [LARGE SCALE GENOMIC DNA]</scope>
    <source>
        <strain>AX4</strain>
    </source>
</reference>
<gene>
    <name type="primary">rasZ</name>
    <name type="ORF">DDB_G0270140</name>
</gene>
<keyword id="KW-1003">Cell membrane</keyword>
<keyword id="KW-0342">GTP-binding</keyword>
<keyword id="KW-0378">Hydrolase</keyword>
<keyword id="KW-0449">Lipoprotein</keyword>
<keyword id="KW-0472">Membrane</keyword>
<keyword id="KW-0488">Methylation</keyword>
<keyword id="KW-0547">Nucleotide-binding</keyword>
<keyword id="KW-0636">Prenylation</keyword>
<keyword id="KW-1185">Reference proteome</keyword>
<proteinExistence type="inferred from homology"/>
<feature type="chain" id="PRO_0000365571" description="Ras-like protein rasZ">
    <location>
        <begin position="1"/>
        <end position="211"/>
    </location>
</feature>
<feature type="propeptide" id="PRO_0000365572" description="Removed in mature form" evidence="1">
    <location>
        <begin position="212"/>
        <end position="214"/>
    </location>
</feature>
<feature type="short sequence motif" description="Effector region">
    <location>
        <begin position="38"/>
        <end position="46"/>
    </location>
</feature>
<feature type="binding site" evidence="1">
    <location>
        <begin position="16"/>
        <end position="23"/>
    </location>
    <ligand>
        <name>GTP</name>
        <dbReference type="ChEBI" id="CHEBI:37565"/>
    </ligand>
</feature>
<feature type="binding site" evidence="1">
    <location>
        <begin position="63"/>
        <end position="67"/>
    </location>
    <ligand>
        <name>GTP</name>
        <dbReference type="ChEBI" id="CHEBI:37565"/>
    </ligand>
</feature>
<feature type="binding site" evidence="1">
    <location>
        <begin position="122"/>
        <end position="125"/>
    </location>
    <ligand>
        <name>GTP</name>
        <dbReference type="ChEBI" id="CHEBI:37565"/>
    </ligand>
</feature>
<feature type="modified residue" description="Cysteine methyl ester" evidence="1">
    <location>
        <position position="211"/>
    </location>
</feature>
<feature type="lipid moiety-binding region" description="S-geranylgeranyl cysteine" evidence="1">
    <location>
        <position position="211"/>
    </location>
</feature>
<dbReference type="EC" id="3.6.5.2" evidence="2"/>
<dbReference type="EMBL" id="AAFI02000005">
    <property type="protein sequence ID" value="EAL72420.1"/>
    <property type="molecule type" value="Genomic_DNA"/>
</dbReference>
<dbReference type="RefSeq" id="XP_646572.1">
    <property type="nucleotide sequence ID" value="XM_641480.1"/>
</dbReference>
<dbReference type="SMR" id="Q55CA9"/>
<dbReference type="FunCoup" id="Q55CA9">
    <property type="interactions" value="8"/>
</dbReference>
<dbReference type="STRING" id="44689.Q55CA9"/>
<dbReference type="PaxDb" id="44689-DDB0229435"/>
<dbReference type="EnsemblProtists" id="EAL72420">
    <property type="protein sequence ID" value="EAL72420"/>
    <property type="gene ID" value="DDB_G0270140"/>
</dbReference>
<dbReference type="GeneID" id="8617541"/>
<dbReference type="KEGG" id="ddi:DDB_G0270140"/>
<dbReference type="dictyBase" id="DDB_G0270140">
    <property type="gene designation" value="rasZ"/>
</dbReference>
<dbReference type="VEuPathDB" id="AmoebaDB:DDB_G0270140"/>
<dbReference type="eggNOG" id="KOG0395">
    <property type="taxonomic scope" value="Eukaryota"/>
</dbReference>
<dbReference type="HOGENOM" id="CLU_041217_9_8_1"/>
<dbReference type="InParanoid" id="Q55CA9"/>
<dbReference type="OMA" id="LGPIYQL"/>
<dbReference type="PhylomeDB" id="Q55CA9"/>
<dbReference type="PRO" id="PR:Q55CA9"/>
<dbReference type="Proteomes" id="UP000002195">
    <property type="component" value="Chromosome 1"/>
</dbReference>
<dbReference type="GO" id="GO:0005886">
    <property type="term" value="C:plasma membrane"/>
    <property type="evidence" value="ECO:0000318"/>
    <property type="project" value="GO_Central"/>
</dbReference>
<dbReference type="GO" id="GO:0003925">
    <property type="term" value="F:G protein activity"/>
    <property type="evidence" value="ECO:0007669"/>
    <property type="project" value="UniProtKB-EC"/>
</dbReference>
<dbReference type="GO" id="GO:0019003">
    <property type="term" value="F:GDP binding"/>
    <property type="evidence" value="ECO:0000318"/>
    <property type="project" value="GO_Central"/>
</dbReference>
<dbReference type="GO" id="GO:0005525">
    <property type="term" value="F:GTP binding"/>
    <property type="evidence" value="ECO:0000318"/>
    <property type="project" value="GO_Central"/>
</dbReference>
<dbReference type="GO" id="GO:0003924">
    <property type="term" value="F:GTPase activity"/>
    <property type="evidence" value="ECO:0000318"/>
    <property type="project" value="GO_Central"/>
</dbReference>
<dbReference type="GO" id="GO:0009617">
    <property type="term" value="P:response to bacterium"/>
    <property type="evidence" value="ECO:0007007"/>
    <property type="project" value="dictyBase"/>
</dbReference>
<dbReference type="GO" id="GO:0019953">
    <property type="term" value="P:sexual reproduction"/>
    <property type="evidence" value="ECO:0000270"/>
    <property type="project" value="dictyBase"/>
</dbReference>
<dbReference type="GO" id="GO:0007165">
    <property type="term" value="P:signal transduction"/>
    <property type="evidence" value="ECO:0007669"/>
    <property type="project" value="InterPro"/>
</dbReference>
<dbReference type="CDD" id="cd00876">
    <property type="entry name" value="Ras"/>
    <property type="match status" value="1"/>
</dbReference>
<dbReference type="FunFam" id="3.40.50.300:FF:000080">
    <property type="entry name" value="Ras-like GTPase Ras1"/>
    <property type="match status" value="1"/>
</dbReference>
<dbReference type="Gene3D" id="3.40.50.300">
    <property type="entry name" value="P-loop containing nucleotide triphosphate hydrolases"/>
    <property type="match status" value="1"/>
</dbReference>
<dbReference type="InterPro" id="IPR027417">
    <property type="entry name" value="P-loop_NTPase"/>
</dbReference>
<dbReference type="InterPro" id="IPR005225">
    <property type="entry name" value="Small_GTP-bd"/>
</dbReference>
<dbReference type="InterPro" id="IPR001806">
    <property type="entry name" value="Small_GTPase"/>
</dbReference>
<dbReference type="InterPro" id="IPR020849">
    <property type="entry name" value="Small_GTPase_Ras-type"/>
</dbReference>
<dbReference type="NCBIfam" id="TIGR00231">
    <property type="entry name" value="small_GTP"/>
    <property type="match status" value="1"/>
</dbReference>
<dbReference type="PANTHER" id="PTHR24070">
    <property type="entry name" value="RAS, DI-RAS, AND RHEB FAMILY MEMBERS OF SMALL GTPASE SUPERFAMILY"/>
    <property type="match status" value="1"/>
</dbReference>
<dbReference type="Pfam" id="PF00071">
    <property type="entry name" value="Ras"/>
    <property type="match status" value="1"/>
</dbReference>
<dbReference type="PRINTS" id="PR00449">
    <property type="entry name" value="RASTRNSFRMNG"/>
</dbReference>
<dbReference type="SMART" id="SM00175">
    <property type="entry name" value="RAB"/>
    <property type="match status" value="1"/>
</dbReference>
<dbReference type="SMART" id="SM00176">
    <property type="entry name" value="RAN"/>
    <property type="match status" value="1"/>
</dbReference>
<dbReference type="SMART" id="SM00173">
    <property type="entry name" value="RAS"/>
    <property type="match status" value="1"/>
</dbReference>
<dbReference type="SMART" id="SM00174">
    <property type="entry name" value="RHO"/>
    <property type="match status" value="1"/>
</dbReference>
<dbReference type="SUPFAM" id="SSF52540">
    <property type="entry name" value="P-loop containing nucleoside triphosphate hydrolases"/>
    <property type="match status" value="1"/>
</dbReference>
<dbReference type="PROSITE" id="PS51421">
    <property type="entry name" value="RAS"/>
    <property type="match status" value="1"/>
</dbReference>
<organism>
    <name type="scientific">Dictyostelium discoideum</name>
    <name type="common">Social amoeba</name>
    <dbReference type="NCBI Taxonomy" id="44689"/>
    <lineage>
        <taxon>Eukaryota</taxon>
        <taxon>Amoebozoa</taxon>
        <taxon>Evosea</taxon>
        <taxon>Eumycetozoa</taxon>
        <taxon>Dictyostelia</taxon>
        <taxon>Dictyosteliales</taxon>
        <taxon>Dictyosteliaceae</taxon>
        <taxon>Dictyostelium</taxon>
    </lineage>
</organism>
<evidence type="ECO:0000250" key="1"/>
<evidence type="ECO:0000250" key="2">
    <source>
        <dbReference type="UniProtKB" id="P32253"/>
    </source>
</evidence>
<evidence type="ECO:0000305" key="3"/>